<reference key="1">
    <citation type="journal article" date="1996" name="Science">
        <title>Complete genome sequence of the methanogenic archaeon, Methanococcus jannaschii.</title>
        <authorList>
            <person name="Bult C.J."/>
            <person name="White O."/>
            <person name="Olsen G.J."/>
            <person name="Zhou L."/>
            <person name="Fleischmann R.D."/>
            <person name="Sutton G.G."/>
            <person name="Blake J.A."/>
            <person name="FitzGerald L.M."/>
            <person name="Clayton R.A."/>
            <person name="Gocayne J.D."/>
            <person name="Kerlavage A.R."/>
            <person name="Dougherty B.A."/>
            <person name="Tomb J.-F."/>
            <person name="Adams M.D."/>
            <person name="Reich C.I."/>
            <person name="Overbeek R."/>
            <person name="Kirkness E.F."/>
            <person name="Weinstock K.G."/>
            <person name="Merrick J.M."/>
            <person name="Glodek A."/>
            <person name="Scott J.L."/>
            <person name="Geoghagen N.S.M."/>
            <person name="Weidman J.F."/>
            <person name="Fuhrmann J.L."/>
            <person name="Nguyen D."/>
            <person name="Utterback T.R."/>
            <person name="Kelley J.M."/>
            <person name="Peterson J.D."/>
            <person name="Sadow P.W."/>
            <person name="Hanna M.C."/>
            <person name="Cotton M.D."/>
            <person name="Roberts K.M."/>
            <person name="Hurst M.A."/>
            <person name="Kaine B.P."/>
            <person name="Borodovsky M."/>
            <person name="Klenk H.-P."/>
            <person name="Fraser C.M."/>
            <person name="Smith H.O."/>
            <person name="Woese C.R."/>
            <person name="Venter J.C."/>
        </authorList>
    </citation>
    <scope>NUCLEOTIDE SEQUENCE [LARGE SCALE GENOMIC DNA]</scope>
    <source>
        <strain>ATCC 43067 / DSM 2661 / JAL-1 / JCM 10045 / NBRC 100440</strain>
    </source>
</reference>
<protein>
    <recommendedName>
        <fullName>UPF0718 protein MJ0584</fullName>
    </recommendedName>
</protein>
<gene>
    <name type="ordered locus">MJ0584</name>
</gene>
<organism>
    <name type="scientific">Methanocaldococcus jannaschii (strain ATCC 43067 / DSM 2661 / JAL-1 / JCM 10045 / NBRC 100440)</name>
    <name type="common">Methanococcus jannaschii</name>
    <dbReference type="NCBI Taxonomy" id="243232"/>
    <lineage>
        <taxon>Archaea</taxon>
        <taxon>Methanobacteriati</taxon>
        <taxon>Methanobacteriota</taxon>
        <taxon>Methanomada group</taxon>
        <taxon>Methanococci</taxon>
        <taxon>Methanococcales</taxon>
        <taxon>Methanocaldococcaceae</taxon>
        <taxon>Methanocaldococcus</taxon>
    </lineage>
</organism>
<proteinExistence type="inferred from homology"/>
<comment type="subcellular location">
    <subcellularLocation>
        <location evidence="2">Cell membrane</location>
        <topology evidence="2">Multi-pass membrane protein</topology>
    </subcellularLocation>
</comment>
<comment type="similarity">
    <text evidence="2">Belongs to the UPF0718 family.</text>
</comment>
<accession>Q58004</accession>
<dbReference type="EMBL" id="L77117">
    <property type="protein sequence ID" value="AAB98577.1"/>
    <property type="molecule type" value="Genomic_DNA"/>
</dbReference>
<dbReference type="PIR" id="H64372">
    <property type="entry name" value="H64372"/>
</dbReference>
<dbReference type="STRING" id="243232.MJ_0584"/>
<dbReference type="PaxDb" id="243232-MJ_0584"/>
<dbReference type="EnsemblBacteria" id="AAB98577">
    <property type="protein sequence ID" value="AAB98577"/>
    <property type="gene ID" value="MJ_0584"/>
</dbReference>
<dbReference type="KEGG" id="mja:MJ_0584"/>
<dbReference type="eggNOG" id="arCOG02712">
    <property type="taxonomic scope" value="Archaea"/>
</dbReference>
<dbReference type="HOGENOM" id="CLU_058185_0_0_2"/>
<dbReference type="InParanoid" id="Q58004"/>
<dbReference type="PhylomeDB" id="Q58004"/>
<dbReference type="Proteomes" id="UP000000805">
    <property type="component" value="Chromosome"/>
</dbReference>
<dbReference type="GO" id="GO:0005886">
    <property type="term" value="C:plasma membrane"/>
    <property type="evidence" value="ECO:0000318"/>
    <property type="project" value="GO_Central"/>
</dbReference>
<dbReference type="InterPro" id="IPR005524">
    <property type="entry name" value="DUF318"/>
</dbReference>
<dbReference type="PANTHER" id="PTHR43299">
    <property type="entry name" value="UPF0718 PROTEIN YRAQ"/>
    <property type="match status" value="1"/>
</dbReference>
<dbReference type="PANTHER" id="PTHR43299:SF1">
    <property type="entry name" value="UPF0718 PROTEIN YRAQ"/>
    <property type="match status" value="1"/>
</dbReference>
<dbReference type="Pfam" id="PF03773">
    <property type="entry name" value="ArsP_1"/>
    <property type="match status" value="1"/>
</dbReference>
<name>Y584_METJA</name>
<keyword id="KW-1003">Cell membrane</keyword>
<keyword id="KW-0472">Membrane</keyword>
<keyword id="KW-1185">Reference proteome</keyword>
<keyword id="KW-0812">Transmembrane</keyword>
<keyword id="KW-1133">Transmembrane helix</keyword>
<evidence type="ECO:0000255" key="1"/>
<evidence type="ECO:0000305" key="2"/>
<sequence length="365" mass="39663">MKMDVMSFIMNIINVMINTIIDYLNVNRVLALLMAFLMAGGIASMINKNFIIKYFGSNTPKYISYTVAAVSGSLLAVCSCTILPLFASIYKRGAGIGPATTFLFSGPAINVLAIFYSAALLGWDIGFLRAVFAVVVSILIGLSMEIIFKSHEKKRALRVPKADKISDRPLYQTITFFALQFIMLLVITASPKLFPTLSMPLYDGFLLKHLLFIILGIILAVTTKIWFKDEEIKNWLRESFTLLKIVFPLLIIGVAIAGAIKAIIPPSYIATYVGGNSITANFIASFIGALMYFATLTEVPIIKALMELGMGVGPAMALLLAGPSLSIPTVLTISKVLGKTKALTYLGLVVIFSTICGYIAGIILR</sequence>
<feature type="chain" id="PRO_0000106944" description="UPF0718 protein MJ0584">
    <location>
        <begin position="1"/>
        <end position="365"/>
    </location>
</feature>
<feature type="transmembrane region" description="Helical" evidence="1">
    <location>
        <begin position="6"/>
        <end position="26"/>
    </location>
</feature>
<feature type="transmembrane region" description="Helical" evidence="1">
    <location>
        <begin position="32"/>
        <end position="52"/>
    </location>
</feature>
<feature type="transmembrane region" description="Helical" evidence="1">
    <location>
        <begin position="67"/>
        <end position="87"/>
    </location>
</feature>
<feature type="transmembrane region" description="Helical" evidence="1">
    <location>
        <begin position="108"/>
        <end position="128"/>
    </location>
</feature>
<feature type="transmembrane region" description="Helical" evidence="1">
    <location>
        <begin position="130"/>
        <end position="150"/>
    </location>
</feature>
<feature type="transmembrane region" description="Helical" evidence="1">
    <location>
        <begin position="174"/>
        <end position="194"/>
    </location>
</feature>
<feature type="transmembrane region" description="Helical" evidence="1">
    <location>
        <begin position="201"/>
        <end position="221"/>
    </location>
</feature>
<feature type="transmembrane region" description="Helical" evidence="1">
    <location>
        <begin position="245"/>
        <end position="265"/>
    </location>
</feature>
<feature type="transmembrane region" description="Helical" evidence="1">
    <location>
        <begin position="282"/>
        <end position="302"/>
    </location>
</feature>
<feature type="transmembrane region" description="Helical" evidence="1">
    <location>
        <begin position="308"/>
        <end position="328"/>
    </location>
</feature>
<feature type="transmembrane region" description="Helical" evidence="1">
    <location>
        <begin position="344"/>
        <end position="364"/>
    </location>
</feature>